<organism>
    <name type="scientific">Escherichia coli (strain K12)</name>
    <dbReference type="NCBI Taxonomy" id="83333"/>
    <lineage>
        <taxon>Bacteria</taxon>
        <taxon>Pseudomonadati</taxon>
        <taxon>Pseudomonadota</taxon>
        <taxon>Gammaproteobacteria</taxon>
        <taxon>Enterobacterales</taxon>
        <taxon>Enterobacteriaceae</taxon>
        <taxon>Escherichia</taxon>
    </lineage>
</organism>
<proteinExistence type="predicted"/>
<feature type="chain" id="PRO_0000169513" description="Uncharacterized protein YheV">
    <location>
        <begin position="1"/>
        <end position="66"/>
    </location>
</feature>
<gene>
    <name type="primary">yheV</name>
    <name type="ordered locus">b4551</name>
    <name type="ordered locus">JW3312</name>
</gene>
<dbReference type="EMBL" id="U00096">
    <property type="protein sequence ID" value="ABD18701.1"/>
    <property type="molecule type" value="Genomic_DNA"/>
</dbReference>
<dbReference type="EMBL" id="AP009048">
    <property type="protein sequence ID" value="BAE77941.1"/>
    <property type="molecule type" value="Genomic_DNA"/>
</dbReference>
<dbReference type="RefSeq" id="WP_001007730.1">
    <property type="nucleotide sequence ID" value="NZ_STEB01000004.1"/>
</dbReference>
<dbReference type="RefSeq" id="YP_588468.1">
    <property type="nucleotide sequence ID" value="NC_000913.3"/>
</dbReference>
<dbReference type="BioGRID" id="4262474">
    <property type="interactions" value="14"/>
</dbReference>
<dbReference type="FunCoup" id="P0ADW8">
    <property type="interactions" value="26"/>
</dbReference>
<dbReference type="STRING" id="511145.b4551"/>
<dbReference type="jPOST" id="P0ADW8"/>
<dbReference type="PaxDb" id="511145-b4551"/>
<dbReference type="EnsemblBacteria" id="ABD18701">
    <property type="protein sequence ID" value="ABD18701"/>
    <property type="gene ID" value="b4551"/>
</dbReference>
<dbReference type="GeneID" id="1450290"/>
<dbReference type="KEGG" id="ecj:JW3312"/>
<dbReference type="KEGG" id="eco:b4551"/>
<dbReference type="KEGG" id="ecoc:C3026_18190"/>
<dbReference type="PATRIC" id="fig|511145.12.peg.3443"/>
<dbReference type="EchoBASE" id="EB4109"/>
<dbReference type="eggNOG" id="COG3529">
    <property type="taxonomic scope" value="Bacteria"/>
</dbReference>
<dbReference type="HOGENOM" id="CLU_186875_0_0_6"/>
<dbReference type="InParanoid" id="P0ADW8"/>
<dbReference type="OMA" id="WWIENNI"/>
<dbReference type="OrthoDB" id="5881059at2"/>
<dbReference type="PhylomeDB" id="P0ADW8"/>
<dbReference type="BioCyc" id="EcoCyc:MONOMER0-2688"/>
<dbReference type="PRO" id="PR:P0ADW8"/>
<dbReference type="Proteomes" id="UP000000625">
    <property type="component" value="Chromosome"/>
</dbReference>
<dbReference type="InterPro" id="IPR012658">
    <property type="entry name" value="YheV"/>
</dbReference>
<dbReference type="NCBIfam" id="TIGR02443">
    <property type="entry name" value="YheV family putative zinc ribbon protein"/>
    <property type="match status" value="1"/>
</dbReference>
<dbReference type="Pfam" id="PF09526">
    <property type="entry name" value="DUF2387"/>
    <property type="match status" value="1"/>
</dbReference>
<sequence length="66" mass="7599">MAIRKRFIAGAKCPACQAQDSMAMWRENNIDIVECVKCGHQMREADKEARDHVRKDEQVIGIFHPD</sequence>
<keyword id="KW-1185">Reference proteome</keyword>
<protein>
    <recommendedName>
        <fullName>Uncharacterized protein YheV</fullName>
    </recommendedName>
</protein>
<name>YHEV_ECOLI</name>
<reference key="1">
    <citation type="journal article" date="1997" name="Science">
        <title>The complete genome sequence of Escherichia coli K-12.</title>
        <authorList>
            <person name="Blattner F.R."/>
            <person name="Plunkett G. III"/>
            <person name="Bloch C.A."/>
            <person name="Perna N.T."/>
            <person name="Burland V."/>
            <person name="Riley M."/>
            <person name="Collado-Vides J."/>
            <person name="Glasner J.D."/>
            <person name="Rode C.K."/>
            <person name="Mayhew G.F."/>
            <person name="Gregor J."/>
            <person name="Davis N.W."/>
            <person name="Kirkpatrick H.A."/>
            <person name="Goeden M.A."/>
            <person name="Rose D.J."/>
            <person name="Mau B."/>
            <person name="Shao Y."/>
        </authorList>
    </citation>
    <scope>NUCLEOTIDE SEQUENCE [LARGE SCALE GENOMIC DNA]</scope>
    <source>
        <strain>K12 / MG1655 / ATCC 47076</strain>
    </source>
</reference>
<reference key="2">
    <citation type="journal article" date="2006" name="Mol. Syst. Biol.">
        <title>Highly accurate genome sequences of Escherichia coli K-12 strains MG1655 and W3110.</title>
        <authorList>
            <person name="Hayashi K."/>
            <person name="Morooka N."/>
            <person name="Yamamoto Y."/>
            <person name="Fujita K."/>
            <person name="Isono K."/>
            <person name="Choi S."/>
            <person name="Ohtsubo E."/>
            <person name="Baba T."/>
            <person name="Wanner B.L."/>
            <person name="Mori H."/>
            <person name="Horiuchi T."/>
        </authorList>
    </citation>
    <scope>NUCLEOTIDE SEQUENCE [LARGE SCALE GENOMIC DNA]</scope>
    <source>
        <strain>K12 / W3110 / ATCC 27325 / DSM 5911</strain>
    </source>
</reference>
<reference key="3">
    <citation type="unpublished observations" date="1998-10">
        <authorList>
            <person name="Rudd K.E."/>
        </authorList>
    </citation>
    <scope>IDENTIFICATION</scope>
</reference>
<accession>P0ADW8</accession>
<accession>P56622</accession>
<accession>Q2EET5</accession>
<accession>Q2M715</accession>